<gene>
    <name evidence="1" type="primary">dapH</name>
    <name type="ordered locus">SSA_2174</name>
</gene>
<reference key="1">
    <citation type="journal article" date="2007" name="J. Bacteriol.">
        <title>Genome of the opportunistic pathogen Streptococcus sanguinis.</title>
        <authorList>
            <person name="Xu P."/>
            <person name="Alves J.M."/>
            <person name="Kitten T."/>
            <person name="Brown A."/>
            <person name="Chen Z."/>
            <person name="Ozaki L.S."/>
            <person name="Manque P."/>
            <person name="Ge X."/>
            <person name="Serrano M.G."/>
            <person name="Puiu D."/>
            <person name="Hendricks S."/>
            <person name="Wang Y."/>
            <person name="Chaplin M.D."/>
            <person name="Akan D."/>
            <person name="Paik S."/>
            <person name="Peterson D.L."/>
            <person name="Macrina F.L."/>
            <person name="Buck G.A."/>
        </authorList>
    </citation>
    <scope>NUCLEOTIDE SEQUENCE [LARGE SCALE GENOMIC DNA]</scope>
    <source>
        <strain>SK36</strain>
    </source>
</reference>
<comment type="function">
    <text evidence="1">Catalyzes the transfer of an acetyl group from acetyl-CoA to tetrahydrodipicolinate.</text>
</comment>
<comment type="catalytic activity">
    <reaction evidence="1">
        <text>(S)-2,3,4,5-tetrahydrodipicolinate + acetyl-CoA + H2O = L-2-acetamido-6-oxoheptanedioate + CoA</text>
        <dbReference type="Rhea" id="RHEA:13085"/>
        <dbReference type="ChEBI" id="CHEBI:15377"/>
        <dbReference type="ChEBI" id="CHEBI:16845"/>
        <dbReference type="ChEBI" id="CHEBI:57287"/>
        <dbReference type="ChEBI" id="CHEBI:57288"/>
        <dbReference type="ChEBI" id="CHEBI:58117"/>
        <dbReference type="EC" id="2.3.1.89"/>
    </reaction>
</comment>
<comment type="pathway">
    <text evidence="1">Amino-acid biosynthesis; L-lysine biosynthesis via DAP pathway; LL-2,6-diaminopimelate from (S)-tetrahydrodipicolinate (acetylase route): step 1/3.</text>
</comment>
<comment type="similarity">
    <text evidence="1">Belongs to the transferase hexapeptide repeat family. DapH subfamily.</text>
</comment>
<feature type="chain" id="PRO_0000376715" description="2,3,4,5-tetrahydropyridine-2,6-dicarboxylate N-acetyltransferase">
    <location>
        <begin position="1"/>
        <end position="232"/>
    </location>
</feature>
<name>DAPH_STRSV</name>
<dbReference type="EC" id="2.3.1.89" evidence="1"/>
<dbReference type="EMBL" id="CP000387">
    <property type="protein sequence ID" value="ABN45540.1"/>
    <property type="molecule type" value="Genomic_DNA"/>
</dbReference>
<dbReference type="RefSeq" id="YP_001036090.1">
    <property type="nucleotide sequence ID" value="NC_009009.1"/>
</dbReference>
<dbReference type="SMR" id="A3CQT5"/>
<dbReference type="STRING" id="388919.SSA_2174"/>
<dbReference type="KEGG" id="ssa:SSA_2174"/>
<dbReference type="PATRIC" id="fig|388919.9.peg.2059"/>
<dbReference type="eggNOG" id="COG2171">
    <property type="taxonomic scope" value="Bacteria"/>
</dbReference>
<dbReference type="HOGENOM" id="CLU_103751_0_0_9"/>
<dbReference type="OrthoDB" id="9788080at2"/>
<dbReference type="UniPathway" id="UPA00034">
    <property type="reaction ID" value="UER00022"/>
</dbReference>
<dbReference type="Proteomes" id="UP000002148">
    <property type="component" value="Chromosome"/>
</dbReference>
<dbReference type="GO" id="GO:0047200">
    <property type="term" value="F:tetrahydrodipicolinate N-acetyltransferase activity"/>
    <property type="evidence" value="ECO:0007669"/>
    <property type="project" value="UniProtKB-EC"/>
</dbReference>
<dbReference type="GO" id="GO:0019877">
    <property type="term" value="P:diaminopimelate biosynthetic process"/>
    <property type="evidence" value="ECO:0007669"/>
    <property type="project" value="UniProtKB-UniRule"/>
</dbReference>
<dbReference type="GO" id="GO:0009089">
    <property type="term" value="P:lysine biosynthetic process via diaminopimelate"/>
    <property type="evidence" value="ECO:0007669"/>
    <property type="project" value="UniProtKB-UniRule"/>
</dbReference>
<dbReference type="CDD" id="cd03350">
    <property type="entry name" value="LbH_THP_succinylT"/>
    <property type="match status" value="1"/>
</dbReference>
<dbReference type="Gene3D" id="2.160.10.10">
    <property type="entry name" value="Hexapeptide repeat proteins"/>
    <property type="match status" value="1"/>
</dbReference>
<dbReference type="Gene3D" id="3.30.70.250">
    <property type="entry name" value="Malonyl-CoA ACP transacylase, ACP-binding"/>
    <property type="match status" value="1"/>
</dbReference>
<dbReference type="HAMAP" id="MF_01691">
    <property type="entry name" value="DapH"/>
    <property type="match status" value="1"/>
</dbReference>
<dbReference type="InterPro" id="IPR019873">
    <property type="entry name" value="DapH"/>
</dbReference>
<dbReference type="InterPro" id="IPR013710">
    <property type="entry name" value="DapH_N"/>
</dbReference>
<dbReference type="InterPro" id="IPR001451">
    <property type="entry name" value="Hexapep"/>
</dbReference>
<dbReference type="InterPro" id="IPR018357">
    <property type="entry name" value="Hexapep_transf_CS"/>
</dbReference>
<dbReference type="InterPro" id="IPR050179">
    <property type="entry name" value="Trans_hexapeptide_repeat"/>
</dbReference>
<dbReference type="InterPro" id="IPR011004">
    <property type="entry name" value="Trimer_LpxA-like_sf"/>
</dbReference>
<dbReference type="NCBIfam" id="TIGR03532">
    <property type="entry name" value="DapD_Ac"/>
    <property type="match status" value="1"/>
</dbReference>
<dbReference type="PANTHER" id="PTHR43300:SF10">
    <property type="entry name" value="2,3,4,5-TETRAHYDROPYRIDINE-2,6-DICARBOXYLATE N-ACETYLTRANSFERASE"/>
    <property type="match status" value="1"/>
</dbReference>
<dbReference type="PANTHER" id="PTHR43300">
    <property type="entry name" value="ACETYLTRANSFERASE"/>
    <property type="match status" value="1"/>
</dbReference>
<dbReference type="Pfam" id="PF08503">
    <property type="entry name" value="DapH_N"/>
    <property type="match status" value="1"/>
</dbReference>
<dbReference type="Pfam" id="PF00132">
    <property type="entry name" value="Hexapep"/>
    <property type="match status" value="1"/>
</dbReference>
<dbReference type="Pfam" id="PF14602">
    <property type="entry name" value="Hexapep_2"/>
    <property type="match status" value="2"/>
</dbReference>
<dbReference type="SUPFAM" id="SSF51161">
    <property type="entry name" value="Trimeric LpxA-like enzymes"/>
    <property type="match status" value="1"/>
</dbReference>
<dbReference type="PROSITE" id="PS00101">
    <property type="entry name" value="HEXAPEP_TRANSFERASES"/>
    <property type="match status" value="2"/>
</dbReference>
<protein>
    <recommendedName>
        <fullName evidence="1">2,3,4,5-tetrahydropyridine-2,6-dicarboxylate N-acetyltransferase</fullName>
        <ecNumber evidence="1">2.3.1.89</ecNumber>
    </recommendedName>
    <alternativeName>
        <fullName evidence="1">Tetrahydrodipicolinate N-acetyltransferase</fullName>
        <shortName evidence="1">THP acetyltransferase</shortName>
        <shortName evidence="1">Tetrahydropicolinate acetylase</shortName>
    </alternativeName>
</protein>
<sequence>MSATKMNAQEIIKFIADAKKKTPVKVTFDGELHGSIPWSVVKLGNVLFGDWEEIKPLLANLEENKTYVVEQDARNSAVPLLDKRDINARIEPGAIIRDQVEIGDNAVIMMGAVINIGAEIGAGTMIDMGAILGGRAIVGKNSHVGAGAVLAGVIEPASAEPVRVGDNVLIGANAVVIEGVQIGSGSVVAAGAIVTQDVPENVVVAGVPARVIKTIDEKTQQKTALEDALRTL</sequence>
<proteinExistence type="inferred from homology"/>
<organism>
    <name type="scientific">Streptococcus sanguinis (strain SK36)</name>
    <dbReference type="NCBI Taxonomy" id="388919"/>
    <lineage>
        <taxon>Bacteria</taxon>
        <taxon>Bacillati</taxon>
        <taxon>Bacillota</taxon>
        <taxon>Bacilli</taxon>
        <taxon>Lactobacillales</taxon>
        <taxon>Streptococcaceae</taxon>
        <taxon>Streptococcus</taxon>
    </lineage>
</organism>
<keyword id="KW-0012">Acyltransferase</keyword>
<keyword id="KW-0028">Amino-acid biosynthesis</keyword>
<keyword id="KW-0220">Diaminopimelate biosynthesis</keyword>
<keyword id="KW-0457">Lysine biosynthesis</keyword>
<keyword id="KW-1185">Reference proteome</keyword>
<keyword id="KW-0677">Repeat</keyword>
<keyword id="KW-0808">Transferase</keyword>
<accession>A3CQT5</accession>
<evidence type="ECO:0000255" key="1">
    <source>
        <dbReference type="HAMAP-Rule" id="MF_01691"/>
    </source>
</evidence>